<feature type="chain" id="PRO_0000047481" description="Zinc finger protein 239">
    <location>
        <begin position="1"/>
        <end position="201"/>
    </location>
</feature>
<feature type="zinc finger region" description="C2H2-type 1" evidence="1">
    <location>
        <begin position="6"/>
        <end position="28"/>
    </location>
</feature>
<feature type="zinc finger region" description="C2H2-type 2" evidence="1">
    <location>
        <begin position="34"/>
        <end position="56"/>
    </location>
</feature>
<feature type="zinc finger region" description="C2H2-type 3" evidence="1">
    <location>
        <begin position="62"/>
        <end position="84"/>
    </location>
</feature>
<feature type="zinc finger region" description="C2H2-type 4" evidence="1">
    <location>
        <begin position="90"/>
        <end position="112"/>
    </location>
</feature>
<feature type="zinc finger region" description="C2H2-type 5" evidence="1">
    <location>
        <begin position="118"/>
        <end position="140"/>
    </location>
</feature>
<feature type="zinc finger region" description="C2H2-type 6" evidence="1">
    <location>
        <begin position="146"/>
        <end position="168"/>
    </location>
</feature>
<feature type="zinc finger region" description="C2H2-type 7" evidence="1">
    <location>
        <begin position="174"/>
        <end position="196"/>
    </location>
</feature>
<feature type="sequence conflict" description="In Ref. 1; AAA39729." evidence="2" ref="1">
    <original>V</original>
    <variation>L</variation>
    <location>
        <position position="27"/>
    </location>
</feature>
<keyword id="KW-0238">DNA-binding</keyword>
<keyword id="KW-0479">Metal-binding</keyword>
<keyword id="KW-0539">Nucleus</keyword>
<keyword id="KW-1185">Reference proteome</keyword>
<keyword id="KW-0677">Repeat</keyword>
<keyword id="KW-0804">Transcription</keyword>
<keyword id="KW-0805">Transcription regulation</keyword>
<keyword id="KW-0862">Zinc</keyword>
<keyword id="KW-0863">Zinc-finger</keyword>
<reference key="1">
    <citation type="journal article" date="1990" name="Mol. Cell. Biol.">
        <title>A gene that encodes a protein consisting solely of zinc finger domains is preferentially expressed in transformed mouse cells.</title>
        <authorList>
            <person name="Ernoult-Lange M."/>
            <person name="Kress M."/>
            <person name="Hamer D."/>
        </authorList>
    </citation>
    <scope>NUCLEOTIDE SEQUENCE [MRNA]</scope>
</reference>
<reference key="2">
    <citation type="journal article" date="2005" name="Science">
        <title>The transcriptional landscape of the mammalian genome.</title>
        <authorList>
            <person name="Carninci P."/>
            <person name="Kasukawa T."/>
            <person name="Katayama S."/>
            <person name="Gough J."/>
            <person name="Frith M.C."/>
            <person name="Maeda N."/>
            <person name="Oyama R."/>
            <person name="Ravasi T."/>
            <person name="Lenhard B."/>
            <person name="Wells C."/>
            <person name="Kodzius R."/>
            <person name="Shimokawa K."/>
            <person name="Bajic V.B."/>
            <person name="Brenner S.E."/>
            <person name="Batalov S."/>
            <person name="Forrest A.R."/>
            <person name="Zavolan M."/>
            <person name="Davis M.J."/>
            <person name="Wilming L.G."/>
            <person name="Aidinis V."/>
            <person name="Allen J.E."/>
            <person name="Ambesi-Impiombato A."/>
            <person name="Apweiler R."/>
            <person name="Aturaliya R.N."/>
            <person name="Bailey T.L."/>
            <person name="Bansal M."/>
            <person name="Baxter L."/>
            <person name="Beisel K.W."/>
            <person name="Bersano T."/>
            <person name="Bono H."/>
            <person name="Chalk A.M."/>
            <person name="Chiu K.P."/>
            <person name="Choudhary V."/>
            <person name="Christoffels A."/>
            <person name="Clutterbuck D.R."/>
            <person name="Crowe M.L."/>
            <person name="Dalla E."/>
            <person name="Dalrymple B.P."/>
            <person name="de Bono B."/>
            <person name="Della Gatta G."/>
            <person name="di Bernardo D."/>
            <person name="Down T."/>
            <person name="Engstrom P."/>
            <person name="Fagiolini M."/>
            <person name="Faulkner G."/>
            <person name="Fletcher C.F."/>
            <person name="Fukushima T."/>
            <person name="Furuno M."/>
            <person name="Futaki S."/>
            <person name="Gariboldi M."/>
            <person name="Georgii-Hemming P."/>
            <person name="Gingeras T.R."/>
            <person name="Gojobori T."/>
            <person name="Green R.E."/>
            <person name="Gustincich S."/>
            <person name="Harbers M."/>
            <person name="Hayashi Y."/>
            <person name="Hensch T.K."/>
            <person name="Hirokawa N."/>
            <person name="Hill D."/>
            <person name="Huminiecki L."/>
            <person name="Iacono M."/>
            <person name="Ikeo K."/>
            <person name="Iwama A."/>
            <person name="Ishikawa T."/>
            <person name="Jakt M."/>
            <person name="Kanapin A."/>
            <person name="Katoh M."/>
            <person name="Kawasawa Y."/>
            <person name="Kelso J."/>
            <person name="Kitamura H."/>
            <person name="Kitano H."/>
            <person name="Kollias G."/>
            <person name="Krishnan S.P."/>
            <person name="Kruger A."/>
            <person name="Kummerfeld S.K."/>
            <person name="Kurochkin I.V."/>
            <person name="Lareau L.F."/>
            <person name="Lazarevic D."/>
            <person name="Lipovich L."/>
            <person name="Liu J."/>
            <person name="Liuni S."/>
            <person name="McWilliam S."/>
            <person name="Madan Babu M."/>
            <person name="Madera M."/>
            <person name="Marchionni L."/>
            <person name="Matsuda H."/>
            <person name="Matsuzawa S."/>
            <person name="Miki H."/>
            <person name="Mignone F."/>
            <person name="Miyake S."/>
            <person name="Morris K."/>
            <person name="Mottagui-Tabar S."/>
            <person name="Mulder N."/>
            <person name="Nakano N."/>
            <person name="Nakauchi H."/>
            <person name="Ng P."/>
            <person name="Nilsson R."/>
            <person name="Nishiguchi S."/>
            <person name="Nishikawa S."/>
            <person name="Nori F."/>
            <person name="Ohara O."/>
            <person name="Okazaki Y."/>
            <person name="Orlando V."/>
            <person name="Pang K.C."/>
            <person name="Pavan W.J."/>
            <person name="Pavesi G."/>
            <person name="Pesole G."/>
            <person name="Petrovsky N."/>
            <person name="Piazza S."/>
            <person name="Reed J."/>
            <person name="Reid J.F."/>
            <person name="Ring B.Z."/>
            <person name="Ringwald M."/>
            <person name="Rost B."/>
            <person name="Ruan Y."/>
            <person name="Salzberg S.L."/>
            <person name="Sandelin A."/>
            <person name="Schneider C."/>
            <person name="Schoenbach C."/>
            <person name="Sekiguchi K."/>
            <person name="Semple C.A."/>
            <person name="Seno S."/>
            <person name="Sessa L."/>
            <person name="Sheng Y."/>
            <person name="Shibata Y."/>
            <person name="Shimada H."/>
            <person name="Shimada K."/>
            <person name="Silva D."/>
            <person name="Sinclair B."/>
            <person name="Sperling S."/>
            <person name="Stupka E."/>
            <person name="Sugiura K."/>
            <person name="Sultana R."/>
            <person name="Takenaka Y."/>
            <person name="Taki K."/>
            <person name="Tammoja K."/>
            <person name="Tan S.L."/>
            <person name="Tang S."/>
            <person name="Taylor M.S."/>
            <person name="Tegner J."/>
            <person name="Teichmann S.A."/>
            <person name="Ueda H.R."/>
            <person name="van Nimwegen E."/>
            <person name="Verardo R."/>
            <person name="Wei C.L."/>
            <person name="Yagi K."/>
            <person name="Yamanishi H."/>
            <person name="Zabarovsky E."/>
            <person name="Zhu S."/>
            <person name="Zimmer A."/>
            <person name="Hide W."/>
            <person name="Bult C."/>
            <person name="Grimmond S.M."/>
            <person name="Teasdale R.D."/>
            <person name="Liu E.T."/>
            <person name="Brusic V."/>
            <person name="Quackenbush J."/>
            <person name="Wahlestedt C."/>
            <person name="Mattick J.S."/>
            <person name="Hume D.A."/>
            <person name="Kai C."/>
            <person name="Sasaki D."/>
            <person name="Tomaru Y."/>
            <person name="Fukuda S."/>
            <person name="Kanamori-Katayama M."/>
            <person name="Suzuki M."/>
            <person name="Aoki J."/>
            <person name="Arakawa T."/>
            <person name="Iida J."/>
            <person name="Imamura K."/>
            <person name="Itoh M."/>
            <person name="Kato T."/>
            <person name="Kawaji H."/>
            <person name="Kawagashira N."/>
            <person name="Kawashima T."/>
            <person name="Kojima M."/>
            <person name="Kondo S."/>
            <person name="Konno H."/>
            <person name="Nakano K."/>
            <person name="Ninomiya N."/>
            <person name="Nishio T."/>
            <person name="Okada M."/>
            <person name="Plessy C."/>
            <person name="Shibata K."/>
            <person name="Shiraki T."/>
            <person name="Suzuki S."/>
            <person name="Tagami M."/>
            <person name="Waki K."/>
            <person name="Watahiki A."/>
            <person name="Okamura-Oho Y."/>
            <person name="Suzuki H."/>
            <person name="Kawai J."/>
            <person name="Hayashizaki Y."/>
        </authorList>
    </citation>
    <scope>NUCLEOTIDE SEQUENCE [LARGE SCALE MRNA]</scope>
    <source>
        <strain>C57BL/6J</strain>
        <tissue>Testis</tissue>
    </source>
</reference>
<reference key="3">
    <citation type="journal article" date="2004" name="Genome Res.">
        <title>The status, quality, and expansion of the NIH full-length cDNA project: the Mammalian Gene Collection (MGC).</title>
        <authorList>
            <consortium name="The MGC Project Team"/>
        </authorList>
    </citation>
    <scope>NUCLEOTIDE SEQUENCE [LARGE SCALE MRNA]</scope>
    <source>
        <strain>129</strain>
        <tissue>Mammary tumor</tissue>
    </source>
</reference>
<accession>P24399</accession>
<accession>Q99J71</accession>
<organism>
    <name type="scientific">Mus musculus</name>
    <name type="common">Mouse</name>
    <dbReference type="NCBI Taxonomy" id="10090"/>
    <lineage>
        <taxon>Eukaryota</taxon>
        <taxon>Metazoa</taxon>
        <taxon>Chordata</taxon>
        <taxon>Craniata</taxon>
        <taxon>Vertebrata</taxon>
        <taxon>Euteleostomi</taxon>
        <taxon>Mammalia</taxon>
        <taxon>Eutheria</taxon>
        <taxon>Euarchontoglires</taxon>
        <taxon>Glires</taxon>
        <taxon>Rodentia</taxon>
        <taxon>Myomorpha</taxon>
        <taxon>Muroidea</taxon>
        <taxon>Muridae</taxon>
        <taxon>Murinae</taxon>
        <taxon>Mus</taxon>
        <taxon>Mus</taxon>
    </lineage>
</organism>
<sequence length="201" mass="22818">MAEKPYKCDKCGKGFTRSSSLLVHHSVHTGEKPFKCDRCGKGFSQSSKLHIHKRVHTGEKPYACEECGMSFSQRSNLHIHQRVHTGERPYKCGECGKGFSQSSNLHIHRCTHTGEKPYQCYECGKGFSQSSDLRIHLRVHTGEKPYHCGKCGQGFSQSSKLLIHQRVHTGEKPYECSKCGKGFSQSSNLHIHQRVHRKELH</sequence>
<evidence type="ECO:0000255" key="1">
    <source>
        <dbReference type="PROSITE-ProRule" id="PRU00042"/>
    </source>
</evidence>
<evidence type="ECO:0000305" key="2"/>
<gene>
    <name type="primary">Znf239</name>
    <name type="synonym">Mok-2</name>
    <name type="synonym">Mok2</name>
    <name type="synonym">Zfp239</name>
</gene>
<protein>
    <recommendedName>
        <fullName>Zinc finger protein 239</fullName>
        <shortName>Zfp-239</shortName>
    </recommendedName>
    <alternativeName>
        <fullName>Zinc finger protein MOK-2</fullName>
    </alternativeName>
</protein>
<comment type="function">
    <text>May be involved in transcriptional regulation.</text>
</comment>
<comment type="subcellular location">
    <subcellularLocation>
        <location evidence="2">Nucleus</location>
    </subcellularLocation>
</comment>
<comment type="tissue specificity">
    <text>Preferentially expressed in transformed mouse cells.</text>
</comment>
<comment type="similarity">
    <text evidence="2">Belongs to the krueppel C2H2-type zinc-finger protein family.</text>
</comment>
<proteinExistence type="evidence at transcript level"/>
<dbReference type="EMBL" id="M32057">
    <property type="protein sequence ID" value="AAA39729.1"/>
    <property type="molecule type" value="mRNA"/>
</dbReference>
<dbReference type="EMBL" id="AK133328">
    <property type="protein sequence ID" value="BAE21606.1"/>
    <property type="molecule type" value="mRNA"/>
</dbReference>
<dbReference type="EMBL" id="BC003315">
    <property type="protein sequence ID" value="AAH03315.1"/>
    <property type="molecule type" value="mRNA"/>
</dbReference>
<dbReference type="CCDS" id="CCDS20466.1"/>
<dbReference type="PIR" id="I57505">
    <property type="entry name" value="I57505"/>
</dbReference>
<dbReference type="RefSeq" id="NP_001001792.1">
    <property type="nucleotide sequence ID" value="NM_001001792.1"/>
</dbReference>
<dbReference type="RefSeq" id="NP_032642.2">
    <property type="nucleotide sequence ID" value="NM_008616.2"/>
</dbReference>
<dbReference type="SMR" id="P24399"/>
<dbReference type="STRING" id="10090.ENSMUSP00000078374"/>
<dbReference type="iPTMnet" id="P24399"/>
<dbReference type="PhosphoSitePlus" id="P24399"/>
<dbReference type="PaxDb" id="10090-ENSMUSP00000078374"/>
<dbReference type="ProteomicsDB" id="275278"/>
<dbReference type="Antibodypedia" id="6019">
    <property type="antibodies" value="112 antibodies from 20 providers"/>
</dbReference>
<dbReference type="DNASU" id="22685"/>
<dbReference type="Ensembl" id="ENSMUST00000079405.15">
    <property type="protein sequence ID" value="ENSMUSP00000078374.8"/>
    <property type="gene ID" value="ENSMUSG00000042097.18"/>
</dbReference>
<dbReference type="Ensembl" id="ENSMUST00000172088.8">
    <property type="protein sequence ID" value="ENSMUSP00000128270.2"/>
    <property type="gene ID" value="ENSMUSG00000042097.18"/>
</dbReference>
<dbReference type="GeneID" id="22685"/>
<dbReference type="KEGG" id="mmu:22685"/>
<dbReference type="UCSC" id="uc009dlc.1">
    <property type="organism name" value="mouse"/>
</dbReference>
<dbReference type="AGR" id="MGI:1306812"/>
<dbReference type="CTD" id="22685"/>
<dbReference type="MGI" id="MGI:1306812">
    <property type="gene designation" value="Zfp239"/>
</dbReference>
<dbReference type="VEuPathDB" id="HostDB:ENSMUSG00000042097"/>
<dbReference type="eggNOG" id="KOG1721">
    <property type="taxonomic scope" value="Eukaryota"/>
</dbReference>
<dbReference type="GeneTree" id="ENSGT00940000163366"/>
<dbReference type="HOGENOM" id="CLU_002678_2_1_1"/>
<dbReference type="InParanoid" id="P24399"/>
<dbReference type="OMA" id="HEMISYE"/>
<dbReference type="OrthoDB" id="654211at2759"/>
<dbReference type="PhylomeDB" id="P24399"/>
<dbReference type="TreeFam" id="TF337055"/>
<dbReference type="BioGRID-ORCS" id="22685">
    <property type="hits" value="2 hits in 77 CRISPR screens"/>
</dbReference>
<dbReference type="PRO" id="PR:P24399"/>
<dbReference type="Proteomes" id="UP000000589">
    <property type="component" value="Chromosome 6"/>
</dbReference>
<dbReference type="RNAct" id="P24399">
    <property type="molecule type" value="protein"/>
</dbReference>
<dbReference type="Bgee" id="ENSMUSG00000042097">
    <property type="expression patterns" value="Expressed in ileal epithelium and 206 other cell types or tissues"/>
</dbReference>
<dbReference type="GO" id="GO:0005634">
    <property type="term" value="C:nucleus"/>
    <property type="evidence" value="ECO:0007669"/>
    <property type="project" value="UniProtKB-SubCell"/>
</dbReference>
<dbReference type="GO" id="GO:0000981">
    <property type="term" value="F:DNA-binding transcription factor activity, RNA polymerase II-specific"/>
    <property type="evidence" value="ECO:0007669"/>
    <property type="project" value="UniProtKB-ARBA"/>
</dbReference>
<dbReference type="GO" id="GO:0000976">
    <property type="term" value="F:transcription cis-regulatory region binding"/>
    <property type="evidence" value="ECO:0007669"/>
    <property type="project" value="UniProtKB-ARBA"/>
</dbReference>
<dbReference type="GO" id="GO:0008270">
    <property type="term" value="F:zinc ion binding"/>
    <property type="evidence" value="ECO:0007669"/>
    <property type="project" value="UniProtKB-KW"/>
</dbReference>
<dbReference type="GO" id="GO:0045944">
    <property type="term" value="P:positive regulation of transcription by RNA polymerase II"/>
    <property type="evidence" value="ECO:0007669"/>
    <property type="project" value="UniProtKB-ARBA"/>
</dbReference>
<dbReference type="FunFam" id="3.30.160.60:FF:000029">
    <property type="entry name" value="GLI family zinc finger 4"/>
    <property type="match status" value="2"/>
</dbReference>
<dbReference type="FunFam" id="3.30.160.60:FF:001158">
    <property type="entry name" value="zinc finger protein 22"/>
    <property type="match status" value="1"/>
</dbReference>
<dbReference type="FunFam" id="3.30.160.60:FF:001195">
    <property type="entry name" value="Zinc finger protein 239"/>
    <property type="match status" value="1"/>
</dbReference>
<dbReference type="FunFam" id="3.30.160.60:FF:002343">
    <property type="entry name" value="Zinc finger protein 33A"/>
    <property type="match status" value="2"/>
</dbReference>
<dbReference type="FunFam" id="3.30.160.60:FF:002357">
    <property type="entry name" value="Zinc finger protein 782"/>
    <property type="match status" value="1"/>
</dbReference>
<dbReference type="Gene3D" id="3.30.160.60">
    <property type="entry name" value="Classic Zinc Finger"/>
    <property type="match status" value="7"/>
</dbReference>
<dbReference type="InterPro" id="IPR050329">
    <property type="entry name" value="GLI_C2H2-zinc-finger"/>
</dbReference>
<dbReference type="InterPro" id="IPR036236">
    <property type="entry name" value="Znf_C2H2_sf"/>
</dbReference>
<dbReference type="InterPro" id="IPR013087">
    <property type="entry name" value="Znf_C2H2_type"/>
</dbReference>
<dbReference type="PANTHER" id="PTHR19818:SF157">
    <property type="entry name" value="C2H2-TYPE DOMAIN-CONTAINING PROTEIN"/>
    <property type="match status" value="1"/>
</dbReference>
<dbReference type="PANTHER" id="PTHR19818">
    <property type="entry name" value="ZINC FINGER PROTEIN ZIC AND GLI"/>
    <property type="match status" value="1"/>
</dbReference>
<dbReference type="Pfam" id="PF00096">
    <property type="entry name" value="zf-C2H2"/>
    <property type="match status" value="7"/>
</dbReference>
<dbReference type="SMART" id="SM00355">
    <property type="entry name" value="ZnF_C2H2"/>
    <property type="match status" value="7"/>
</dbReference>
<dbReference type="SUPFAM" id="SSF57667">
    <property type="entry name" value="beta-beta-alpha zinc fingers"/>
    <property type="match status" value="4"/>
</dbReference>
<dbReference type="PROSITE" id="PS00028">
    <property type="entry name" value="ZINC_FINGER_C2H2_1"/>
    <property type="match status" value="7"/>
</dbReference>
<dbReference type="PROSITE" id="PS50157">
    <property type="entry name" value="ZINC_FINGER_C2H2_2"/>
    <property type="match status" value="7"/>
</dbReference>
<name>ZN239_MOUSE</name>